<evidence type="ECO:0000250" key="1"/>
<evidence type="ECO:0000250" key="2">
    <source>
        <dbReference type="UniProtKB" id="Q92738"/>
    </source>
</evidence>
<evidence type="ECO:0000255" key="3">
    <source>
        <dbReference type="PROSITE-ProRule" id="PRU00163"/>
    </source>
</evidence>
<evidence type="ECO:0000256" key="4">
    <source>
        <dbReference type="SAM" id="MobiDB-lite"/>
    </source>
</evidence>
<evidence type="ECO:0000303" key="5">
    <source>
    </source>
</evidence>
<evidence type="ECO:0000305" key="6"/>
<evidence type="ECO:0007744" key="7">
    <source>
    </source>
</evidence>
<evidence type="ECO:0007744" key="8">
    <source>
    </source>
</evidence>
<organism>
    <name type="scientific">Mus musculus</name>
    <name type="common">Mouse</name>
    <dbReference type="NCBI Taxonomy" id="10090"/>
    <lineage>
        <taxon>Eukaryota</taxon>
        <taxon>Metazoa</taxon>
        <taxon>Chordata</taxon>
        <taxon>Craniata</taxon>
        <taxon>Vertebrata</taxon>
        <taxon>Euteleostomi</taxon>
        <taxon>Mammalia</taxon>
        <taxon>Eutheria</taxon>
        <taxon>Euarchontoglires</taxon>
        <taxon>Glires</taxon>
        <taxon>Rodentia</taxon>
        <taxon>Myomorpha</taxon>
        <taxon>Muroidea</taxon>
        <taxon>Muridae</taxon>
        <taxon>Murinae</taxon>
        <taxon>Mus</taxon>
        <taxon>Mus</taxon>
    </lineage>
</organism>
<dbReference type="EMBL" id="AK129037">
    <property type="protein sequence ID" value="BAC97847.1"/>
    <property type="status" value="ALT_INIT"/>
    <property type="molecule type" value="mRNA"/>
</dbReference>
<dbReference type="EMBL" id="AK155073">
    <property type="protein sequence ID" value="BAE33027.1"/>
    <property type="molecule type" value="mRNA"/>
</dbReference>
<dbReference type="EMBL" id="AL845275">
    <property type="status" value="NOT_ANNOTATED_CDS"/>
    <property type="molecule type" value="Genomic_DNA"/>
</dbReference>
<dbReference type="EMBL" id="AL845515">
    <property type="status" value="NOT_ANNOTATED_CDS"/>
    <property type="molecule type" value="Genomic_DNA"/>
</dbReference>
<dbReference type="EMBL" id="BC051184">
    <property type="status" value="NOT_ANNOTATED_CDS"/>
    <property type="molecule type" value="mRNA"/>
</dbReference>
<dbReference type="CCDS" id="CCDS38043.1">
    <molecule id="Q80XC3-1"/>
</dbReference>
<dbReference type="CCDS" id="CCDS38044.1">
    <molecule id="Q80XC3-2"/>
</dbReference>
<dbReference type="RefSeq" id="NP_001074017.1">
    <molecule id="Q80XC3-1"/>
    <property type="nucleotide sequence ID" value="NM_001080548.1"/>
</dbReference>
<dbReference type="RefSeq" id="NP_852064.2">
    <molecule id="Q80XC3-2"/>
    <property type="nucleotide sequence ID" value="NM_181399.3"/>
</dbReference>
<dbReference type="RefSeq" id="XP_006497632.1">
    <molecule id="Q80XC3-1"/>
    <property type="nucleotide sequence ID" value="XM_006497569.5"/>
</dbReference>
<dbReference type="SMR" id="Q80XC3"/>
<dbReference type="BioGRID" id="221154">
    <property type="interactions" value="2"/>
</dbReference>
<dbReference type="FunCoup" id="Q80XC3">
    <property type="interactions" value="2411"/>
</dbReference>
<dbReference type="STRING" id="10090.ENSMUSP00000043178"/>
<dbReference type="iPTMnet" id="Q80XC3"/>
<dbReference type="PhosphoSitePlus" id="Q80XC3"/>
<dbReference type="SwissPalm" id="Q80XC3"/>
<dbReference type="PaxDb" id="10090-ENSMUSP00000043178"/>
<dbReference type="ProteomicsDB" id="275395">
    <molecule id="Q80XC3-1"/>
</dbReference>
<dbReference type="ProteomicsDB" id="275396">
    <molecule id="Q80XC3-2"/>
</dbReference>
<dbReference type="Antibodypedia" id="52457">
    <property type="antibodies" value="106 antibodies from 20 providers"/>
</dbReference>
<dbReference type="DNASU" id="98910"/>
<dbReference type="Ensembl" id="ENSMUST00000042503.9">
    <molecule id="Q80XC3-2"/>
    <property type="protein sequence ID" value="ENSMUSP00000043178.9"/>
    <property type="gene ID" value="ENSMUSG00000039046.16"/>
</dbReference>
<dbReference type="Ensembl" id="ENSMUST00000114937.8">
    <molecule id="Q80XC3-1"/>
    <property type="protein sequence ID" value="ENSMUSP00000110587.2"/>
    <property type="gene ID" value="ENSMUSG00000039046.16"/>
</dbReference>
<dbReference type="GeneID" id="98910"/>
<dbReference type="KEGG" id="mmu:98910"/>
<dbReference type="UCSC" id="uc008igk.1">
    <molecule id="Q80XC3-1"/>
    <property type="organism name" value="mouse"/>
</dbReference>
<dbReference type="UCSC" id="uc008igl.1">
    <molecule id="Q80XC3-2"/>
    <property type="organism name" value="mouse"/>
</dbReference>
<dbReference type="AGR" id="MGI:2138893"/>
<dbReference type="CTD" id="9712"/>
<dbReference type="MGI" id="MGI:2138893">
    <property type="gene designation" value="Usp6nl"/>
</dbReference>
<dbReference type="VEuPathDB" id="HostDB:ENSMUSG00000039046"/>
<dbReference type="eggNOG" id="KOG1102">
    <property type="taxonomic scope" value="Eukaryota"/>
</dbReference>
<dbReference type="GeneTree" id="ENSGT00940000156715"/>
<dbReference type="HOGENOM" id="CLU_005350_10_3_1"/>
<dbReference type="InParanoid" id="Q80XC3"/>
<dbReference type="OMA" id="EFVPRWN"/>
<dbReference type="OrthoDB" id="294251at2759"/>
<dbReference type="PhylomeDB" id="Q80XC3"/>
<dbReference type="TreeFam" id="TF318099"/>
<dbReference type="Reactome" id="R-MMU-6811440">
    <property type="pathway name" value="Retrograde transport at the Trans-Golgi-Network"/>
</dbReference>
<dbReference type="BioGRID-ORCS" id="98910">
    <property type="hits" value="2 hits in 47 CRISPR screens"/>
</dbReference>
<dbReference type="ChiTaRS" id="Usp6nl">
    <property type="organism name" value="mouse"/>
</dbReference>
<dbReference type="PRO" id="PR:Q80XC3"/>
<dbReference type="Proteomes" id="UP000000589">
    <property type="component" value="Chromosome 2"/>
</dbReference>
<dbReference type="RNAct" id="Q80XC3">
    <property type="molecule type" value="protein"/>
</dbReference>
<dbReference type="Bgee" id="ENSMUSG00000039046">
    <property type="expression patterns" value="Expressed in sciatic nerve and 215 other cell types or tissues"/>
</dbReference>
<dbReference type="GO" id="GO:0031410">
    <property type="term" value="C:cytoplasmic vesicle"/>
    <property type="evidence" value="ECO:0000250"/>
    <property type="project" value="UniProtKB"/>
</dbReference>
<dbReference type="GO" id="GO:0005794">
    <property type="term" value="C:Golgi apparatus"/>
    <property type="evidence" value="ECO:0007669"/>
    <property type="project" value="UniProtKB-SubCell"/>
</dbReference>
<dbReference type="GO" id="GO:0005886">
    <property type="term" value="C:plasma membrane"/>
    <property type="evidence" value="ECO:0007669"/>
    <property type="project" value="Ensembl"/>
</dbReference>
<dbReference type="GO" id="GO:0005096">
    <property type="term" value="F:GTPase activator activity"/>
    <property type="evidence" value="ECO:0000250"/>
    <property type="project" value="UniProtKB"/>
</dbReference>
<dbReference type="GO" id="GO:0031267">
    <property type="term" value="F:small GTPase binding"/>
    <property type="evidence" value="ECO:0007669"/>
    <property type="project" value="Ensembl"/>
</dbReference>
<dbReference type="GO" id="GO:0007030">
    <property type="term" value="P:Golgi organization"/>
    <property type="evidence" value="ECO:0000250"/>
    <property type="project" value="UniProtKB"/>
</dbReference>
<dbReference type="GO" id="GO:0048227">
    <property type="term" value="P:plasma membrane to endosome transport"/>
    <property type="evidence" value="ECO:0007669"/>
    <property type="project" value="Ensembl"/>
</dbReference>
<dbReference type="GO" id="GO:1903358">
    <property type="term" value="P:regulation of Golgi organization"/>
    <property type="evidence" value="ECO:0007669"/>
    <property type="project" value="Ensembl"/>
</dbReference>
<dbReference type="GO" id="GO:0035526">
    <property type="term" value="P:retrograde transport, plasma membrane to Golgi"/>
    <property type="evidence" value="ECO:0000250"/>
    <property type="project" value="UniProtKB"/>
</dbReference>
<dbReference type="GO" id="GO:0019068">
    <property type="term" value="P:virion assembly"/>
    <property type="evidence" value="ECO:0007669"/>
    <property type="project" value="Ensembl"/>
</dbReference>
<dbReference type="FunFam" id="1.10.8.270:FF:000010">
    <property type="entry name" value="Putative USP6 N-terminal-like protein"/>
    <property type="match status" value="1"/>
</dbReference>
<dbReference type="FunFam" id="1.10.10.750:FF:000001">
    <property type="entry name" value="TBC1 domain family member 10A"/>
    <property type="match status" value="1"/>
</dbReference>
<dbReference type="FunFam" id="1.10.472.80:FF:000019">
    <property type="entry name" value="USP6 N-terminal like"/>
    <property type="match status" value="1"/>
</dbReference>
<dbReference type="Gene3D" id="1.10.8.270">
    <property type="entry name" value="putative rabgap domain of human tbc1 domain family member 14 like domains"/>
    <property type="match status" value="1"/>
</dbReference>
<dbReference type="Gene3D" id="1.10.10.750">
    <property type="entry name" value="Ypt/Rab-GAP domain of gyp1p, domain 1"/>
    <property type="match status" value="1"/>
</dbReference>
<dbReference type="Gene3D" id="1.10.472.80">
    <property type="entry name" value="Ypt/Rab-GAP domain of gyp1p, domain 3"/>
    <property type="match status" value="1"/>
</dbReference>
<dbReference type="InterPro" id="IPR000195">
    <property type="entry name" value="Rab-GAP-TBC_dom"/>
</dbReference>
<dbReference type="InterPro" id="IPR035969">
    <property type="entry name" value="Rab-GAP_TBC_sf"/>
</dbReference>
<dbReference type="InterPro" id="IPR050302">
    <property type="entry name" value="Rab_GAP_TBC_domain"/>
</dbReference>
<dbReference type="PANTHER" id="PTHR47219">
    <property type="entry name" value="RAB GTPASE-ACTIVATING PROTEIN 1-LIKE"/>
    <property type="match status" value="1"/>
</dbReference>
<dbReference type="PANTHER" id="PTHR47219:SF19">
    <property type="entry name" value="USP6 N-TERMINAL-LIKE PROTEIN ISOFORM X1"/>
    <property type="match status" value="1"/>
</dbReference>
<dbReference type="Pfam" id="PF00566">
    <property type="entry name" value="RabGAP-TBC"/>
    <property type="match status" value="1"/>
</dbReference>
<dbReference type="SMART" id="SM00164">
    <property type="entry name" value="TBC"/>
    <property type="match status" value="1"/>
</dbReference>
<dbReference type="SUPFAM" id="SSF47923">
    <property type="entry name" value="Ypt/Rab-GAP domain of gyp1p"/>
    <property type="match status" value="2"/>
</dbReference>
<dbReference type="PROSITE" id="PS50086">
    <property type="entry name" value="TBC_RABGAP"/>
    <property type="match status" value="1"/>
</dbReference>
<comment type="function">
    <text evidence="1">Acts as a GTPase-activating protein for RAB5A and RAB43. Involved in receptor trafficking. In complex with EPS8 inhibits internalization of EGFR. Involved in retrograde transport from the endocytic pathway to the Golgi apparatus. Involved in the transport of Shiga toxin from early and recycling endosomes to the trans-Golgi network. Required for structural integrity of the Golgi complex (By similarity).</text>
</comment>
<comment type="subunit">
    <text evidence="1">Interacts with EPS8.</text>
</comment>
<comment type="subcellular location">
    <subcellularLocation>
        <location evidence="1">Golgi apparatus</location>
    </subcellularLocation>
    <subcellularLocation>
        <location evidence="1">Cytoplasmic vesicle</location>
    </subcellularLocation>
</comment>
<comment type="alternative products">
    <event type="alternative splicing"/>
    <isoform>
        <id>Q80XC3-1</id>
        <name>1</name>
        <sequence type="displayed"/>
    </isoform>
    <isoform>
        <id>Q80XC3-2</id>
        <name>2</name>
        <sequence type="described" ref="VSP_011153"/>
    </isoform>
</comment>
<comment type="sequence caution" evidence="6">
    <conflict type="erroneous initiation">
        <sequence resource="EMBL-CDS" id="BAC97847"/>
    </conflict>
</comment>
<comment type="sequence caution" evidence="6">
    <conflict type="frameshift">
        <sequence resource="EMBL" id="BC051184"/>
    </conflict>
</comment>
<name>US6NL_MOUSE</name>
<feature type="chain" id="PRO_0000208057" description="USP6 N-terminal-like protein">
    <location>
        <begin position="1"/>
        <end position="819"/>
    </location>
</feature>
<feature type="domain" description="Rab-GAP TBC" evidence="3">
    <location>
        <begin position="100"/>
        <end position="292"/>
    </location>
</feature>
<feature type="region of interest" description="Disordered" evidence="4">
    <location>
        <begin position="355"/>
        <end position="498"/>
    </location>
</feature>
<feature type="region of interest" description="Disordered" evidence="4">
    <location>
        <begin position="513"/>
        <end position="678"/>
    </location>
</feature>
<feature type="region of interest" description="Disordered" evidence="4">
    <location>
        <begin position="788"/>
        <end position="807"/>
    </location>
</feature>
<feature type="compositionally biased region" description="Basic and acidic residues" evidence="4">
    <location>
        <begin position="355"/>
        <end position="367"/>
    </location>
</feature>
<feature type="compositionally biased region" description="Basic and acidic residues" evidence="4">
    <location>
        <begin position="399"/>
        <end position="414"/>
    </location>
</feature>
<feature type="compositionally biased region" description="Basic and acidic residues" evidence="4">
    <location>
        <begin position="432"/>
        <end position="449"/>
    </location>
</feature>
<feature type="compositionally biased region" description="Low complexity" evidence="4">
    <location>
        <begin position="464"/>
        <end position="476"/>
    </location>
</feature>
<feature type="compositionally biased region" description="Basic and acidic residues" evidence="4">
    <location>
        <begin position="477"/>
        <end position="489"/>
    </location>
</feature>
<feature type="compositionally biased region" description="Basic and acidic residues" evidence="4">
    <location>
        <begin position="533"/>
        <end position="542"/>
    </location>
</feature>
<feature type="compositionally biased region" description="Basic and acidic residues" evidence="4">
    <location>
        <begin position="556"/>
        <end position="571"/>
    </location>
</feature>
<feature type="compositionally biased region" description="Polar residues" evidence="4">
    <location>
        <begin position="642"/>
        <end position="655"/>
    </location>
</feature>
<feature type="compositionally biased region" description="Low complexity" evidence="4">
    <location>
        <begin position="788"/>
        <end position="802"/>
    </location>
</feature>
<feature type="modified residue" description="N-acetylmethionine" evidence="2">
    <location>
        <position position="1"/>
    </location>
</feature>
<feature type="modified residue" description="Phosphoserine" evidence="2">
    <location>
        <position position="389"/>
    </location>
</feature>
<feature type="modified residue" description="Phosphoserine" evidence="2">
    <location>
        <position position="394"/>
    </location>
</feature>
<feature type="modified residue" description="Phosphoserine" evidence="2">
    <location>
        <position position="398"/>
    </location>
</feature>
<feature type="modified residue" description="Phosphoserine" evidence="7 8">
    <location>
        <position position="544"/>
    </location>
</feature>
<feature type="modified residue" description="Phosphoserine" evidence="8">
    <location>
        <position position="547"/>
    </location>
</feature>
<feature type="modified residue" description="Phosphoserine" evidence="2">
    <location>
        <position position="574"/>
    </location>
</feature>
<feature type="modified residue" description="Phosphoserine" evidence="2">
    <location>
        <position position="631"/>
    </location>
</feature>
<feature type="modified residue" description="Phosphoserine" evidence="2">
    <location>
        <position position="644"/>
    </location>
</feature>
<feature type="modified residue" description="Phosphoserine" evidence="2">
    <location>
        <position position="648"/>
    </location>
</feature>
<feature type="modified residue" description="Phosphoserine" evidence="8">
    <location>
        <position position="665"/>
    </location>
</feature>
<feature type="modified residue" description="Phosphoserine" evidence="2">
    <location>
        <position position="669"/>
    </location>
</feature>
<feature type="modified residue" description="Phosphoserine" evidence="2">
    <location>
        <position position="704"/>
    </location>
</feature>
<feature type="modified residue" description="Phosphotyrosine" evidence="2">
    <location>
        <position position="717"/>
    </location>
</feature>
<feature type="splice variant" id="VSP_011153" description="In isoform 2." evidence="5">
    <original>MN</original>
    <variation>MIQVLQLVKELVTPSRQKAATAKED</variation>
    <location>
        <begin position="1"/>
        <end position="2"/>
    </location>
</feature>
<feature type="sequence conflict" description="In Ref. 2; BAE33027." evidence="6" ref="2">
    <original>E</original>
    <variation>G</variation>
    <location>
        <position position="446"/>
    </location>
</feature>
<feature type="sequence conflict" description="In Ref. 2; BAE33027." evidence="6" ref="2">
    <original>A</original>
    <variation>V</variation>
    <location>
        <position position="765"/>
    </location>
</feature>
<keyword id="KW-0007">Acetylation</keyword>
<keyword id="KW-0025">Alternative splicing</keyword>
<keyword id="KW-0968">Cytoplasmic vesicle</keyword>
<keyword id="KW-0333">Golgi apparatus</keyword>
<keyword id="KW-0343">GTPase activation</keyword>
<keyword id="KW-0597">Phosphoprotein</keyword>
<keyword id="KW-1185">Reference proteome</keyword>
<protein>
    <recommendedName>
        <fullName>USP6 N-terminal-like protein</fullName>
    </recommendedName>
</protein>
<accession>Q80XC3</accession>
<accession>A2AR45</accession>
<accession>A2AR46</accession>
<accession>Q3U2W3</accession>
<accession>Q6ZQK8</accession>
<reference key="1">
    <citation type="journal article" date="2003" name="DNA Res.">
        <title>Prediction of the coding sequences of mouse homologues of KIAA gene: III. The complete nucleotide sequences of 500 mouse KIAA-homologous cDNAs identified by screening of terminal sequences of cDNA clones randomly sampled from size-fractionated libraries.</title>
        <authorList>
            <person name="Okazaki N."/>
            <person name="Kikuno R."/>
            <person name="Ohara R."/>
            <person name="Inamoto S."/>
            <person name="Koseki H."/>
            <person name="Hiraoka S."/>
            <person name="Saga Y."/>
            <person name="Nagase T."/>
            <person name="Ohara O."/>
            <person name="Koga H."/>
        </authorList>
    </citation>
    <scope>NUCLEOTIDE SEQUENCE [LARGE SCALE MRNA] (ISOFORM 1)</scope>
    <source>
        <tissue>Embryonic tail</tissue>
    </source>
</reference>
<reference key="2">
    <citation type="journal article" date="2005" name="Science">
        <title>The transcriptional landscape of the mammalian genome.</title>
        <authorList>
            <person name="Carninci P."/>
            <person name="Kasukawa T."/>
            <person name="Katayama S."/>
            <person name="Gough J."/>
            <person name="Frith M.C."/>
            <person name="Maeda N."/>
            <person name="Oyama R."/>
            <person name="Ravasi T."/>
            <person name="Lenhard B."/>
            <person name="Wells C."/>
            <person name="Kodzius R."/>
            <person name="Shimokawa K."/>
            <person name="Bajic V.B."/>
            <person name="Brenner S.E."/>
            <person name="Batalov S."/>
            <person name="Forrest A.R."/>
            <person name="Zavolan M."/>
            <person name="Davis M.J."/>
            <person name="Wilming L.G."/>
            <person name="Aidinis V."/>
            <person name="Allen J.E."/>
            <person name="Ambesi-Impiombato A."/>
            <person name="Apweiler R."/>
            <person name="Aturaliya R.N."/>
            <person name="Bailey T.L."/>
            <person name="Bansal M."/>
            <person name="Baxter L."/>
            <person name="Beisel K.W."/>
            <person name="Bersano T."/>
            <person name="Bono H."/>
            <person name="Chalk A.M."/>
            <person name="Chiu K.P."/>
            <person name="Choudhary V."/>
            <person name="Christoffels A."/>
            <person name="Clutterbuck D.R."/>
            <person name="Crowe M.L."/>
            <person name="Dalla E."/>
            <person name="Dalrymple B.P."/>
            <person name="de Bono B."/>
            <person name="Della Gatta G."/>
            <person name="di Bernardo D."/>
            <person name="Down T."/>
            <person name="Engstrom P."/>
            <person name="Fagiolini M."/>
            <person name="Faulkner G."/>
            <person name="Fletcher C.F."/>
            <person name="Fukushima T."/>
            <person name="Furuno M."/>
            <person name="Futaki S."/>
            <person name="Gariboldi M."/>
            <person name="Georgii-Hemming P."/>
            <person name="Gingeras T.R."/>
            <person name="Gojobori T."/>
            <person name="Green R.E."/>
            <person name="Gustincich S."/>
            <person name="Harbers M."/>
            <person name="Hayashi Y."/>
            <person name="Hensch T.K."/>
            <person name="Hirokawa N."/>
            <person name="Hill D."/>
            <person name="Huminiecki L."/>
            <person name="Iacono M."/>
            <person name="Ikeo K."/>
            <person name="Iwama A."/>
            <person name="Ishikawa T."/>
            <person name="Jakt M."/>
            <person name="Kanapin A."/>
            <person name="Katoh M."/>
            <person name="Kawasawa Y."/>
            <person name="Kelso J."/>
            <person name="Kitamura H."/>
            <person name="Kitano H."/>
            <person name="Kollias G."/>
            <person name="Krishnan S.P."/>
            <person name="Kruger A."/>
            <person name="Kummerfeld S.K."/>
            <person name="Kurochkin I.V."/>
            <person name="Lareau L.F."/>
            <person name="Lazarevic D."/>
            <person name="Lipovich L."/>
            <person name="Liu J."/>
            <person name="Liuni S."/>
            <person name="McWilliam S."/>
            <person name="Madan Babu M."/>
            <person name="Madera M."/>
            <person name="Marchionni L."/>
            <person name="Matsuda H."/>
            <person name="Matsuzawa S."/>
            <person name="Miki H."/>
            <person name="Mignone F."/>
            <person name="Miyake S."/>
            <person name="Morris K."/>
            <person name="Mottagui-Tabar S."/>
            <person name="Mulder N."/>
            <person name="Nakano N."/>
            <person name="Nakauchi H."/>
            <person name="Ng P."/>
            <person name="Nilsson R."/>
            <person name="Nishiguchi S."/>
            <person name="Nishikawa S."/>
            <person name="Nori F."/>
            <person name="Ohara O."/>
            <person name="Okazaki Y."/>
            <person name="Orlando V."/>
            <person name="Pang K.C."/>
            <person name="Pavan W.J."/>
            <person name="Pavesi G."/>
            <person name="Pesole G."/>
            <person name="Petrovsky N."/>
            <person name="Piazza S."/>
            <person name="Reed J."/>
            <person name="Reid J.F."/>
            <person name="Ring B.Z."/>
            <person name="Ringwald M."/>
            <person name="Rost B."/>
            <person name="Ruan Y."/>
            <person name="Salzberg S.L."/>
            <person name="Sandelin A."/>
            <person name="Schneider C."/>
            <person name="Schoenbach C."/>
            <person name="Sekiguchi K."/>
            <person name="Semple C.A."/>
            <person name="Seno S."/>
            <person name="Sessa L."/>
            <person name="Sheng Y."/>
            <person name="Shibata Y."/>
            <person name="Shimada H."/>
            <person name="Shimada K."/>
            <person name="Silva D."/>
            <person name="Sinclair B."/>
            <person name="Sperling S."/>
            <person name="Stupka E."/>
            <person name="Sugiura K."/>
            <person name="Sultana R."/>
            <person name="Takenaka Y."/>
            <person name="Taki K."/>
            <person name="Tammoja K."/>
            <person name="Tan S.L."/>
            <person name="Tang S."/>
            <person name="Taylor M.S."/>
            <person name="Tegner J."/>
            <person name="Teichmann S.A."/>
            <person name="Ueda H.R."/>
            <person name="van Nimwegen E."/>
            <person name="Verardo R."/>
            <person name="Wei C.L."/>
            <person name="Yagi K."/>
            <person name="Yamanishi H."/>
            <person name="Zabarovsky E."/>
            <person name="Zhu S."/>
            <person name="Zimmer A."/>
            <person name="Hide W."/>
            <person name="Bult C."/>
            <person name="Grimmond S.M."/>
            <person name="Teasdale R.D."/>
            <person name="Liu E.T."/>
            <person name="Brusic V."/>
            <person name="Quackenbush J."/>
            <person name="Wahlestedt C."/>
            <person name="Mattick J.S."/>
            <person name="Hume D.A."/>
            <person name="Kai C."/>
            <person name="Sasaki D."/>
            <person name="Tomaru Y."/>
            <person name="Fukuda S."/>
            <person name="Kanamori-Katayama M."/>
            <person name="Suzuki M."/>
            <person name="Aoki J."/>
            <person name="Arakawa T."/>
            <person name="Iida J."/>
            <person name="Imamura K."/>
            <person name="Itoh M."/>
            <person name="Kato T."/>
            <person name="Kawaji H."/>
            <person name="Kawagashira N."/>
            <person name="Kawashima T."/>
            <person name="Kojima M."/>
            <person name="Kondo S."/>
            <person name="Konno H."/>
            <person name="Nakano K."/>
            <person name="Ninomiya N."/>
            <person name="Nishio T."/>
            <person name="Okada M."/>
            <person name="Plessy C."/>
            <person name="Shibata K."/>
            <person name="Shiraki T."/>
            <person name="Suzuki S."/>
            <person name="Tagami M."/>
            <person name="Waki K."/>
            <person name="Watahiki A."/>
            <person name="Okamura-Oho Y."/>
            <person name="Suzuki H."/>
            <person name="Kawai J."/>
            <person name="Hayashizaki Y."/>
        </authorList>
    </citation>
    <scope>NUCLEOTIDE SEQUENCE [LARGE SCALE MRNA] (ISOFORM 1)</scope>
    <source>
        <strain>NOD</strain>
        <tissue>Dendritic cell</tissue>
    </source>
</reference>
<reference key="3">
    <citation type="journal article" date="2009" name="PLoS Biol.">
        <title>Lineage-specific biology revealed by a finished genome assembly of the mouse.</title>
        <authorList>
            <person name="Church D.M."/>
            <person name="Goodstadt L."/>
            <person name="Hillier L.W."/>
            <person name="Zody M.C."/>
            <person name="Goldstein S."/>
            <person name="She X."/>
            <person name="Bult C.J."/>
            <person name="Agarwala R."/>
            <person name="Cherry J.L."/>
            <person name="DiCuccio M."/>
            <person name="Hlavina W."/>
            <person name="Kapustin Y."/>
            <person name="Meric P."/>
            <person name="Maglott D."/>
            <person name="Birtle Z."/>
            <person name="Marques A.C."/>
            <person name="Graves T."/>
            <person name="Zhou S."/>
            <person name="Teague B."/>
            <person name="Potamousis K."/>
            <person name="Churas C."/>
            <person name="Place M."/>
            <person name="Herschleb J."/>
            <person name="Runnheim R."/>
            <person name="Forrest D."/>
            <person name="Amos-Landgraf J."/>
            <person name="Schwartz D.C."/>
            <person name="Cheng Z."/>
            <person name="Lindblad-Toh K."/>
            <person name="Eichler E.E."/>
            <person name="Ponting C.P."/>
        </authorList>
    </citation>
    <scope>NUCLEOTIDE SEQUENCE [LARGE SCALE GENOMIC DNA]</scope>
    <source>
        <strain>C57BL/6J</strain>
    </source>
</reference>
<reference key="4">
    <citation type="journal article" date="2004" name="Genome Res.">
        <title>The status, quality, and expansion of the NIH full-length cDNA project: the Mammalian Gene Collection (MGC).</title>
        <authorList>
            <consortium name="The MGC Project Team"/>
        </authorList>
    </citation>
    <scope>NUCLEOTIDE SEQUENCE [LARGE SCALE MRNA] (ISOFORM 2)</scope>
    <source>
        <strain>C57BL/6J</strain>
        <tissue>Retina</tissue>
    </source>
</reference>
<reference key="5">
    <citation type="journal article" date="2007" name="Proc. Natl. Acad. Sci. U.S.A.">
        <title>Large-scale phosphorylation analysis of mouse liver.</title>
        <authorList>
            <person name="Villen J."/>
            <person name="Beausoleil S.A."/>
            <person name="Gerber S.A."/>
            <person name="Gygi S.P."/>
        </authorList>
    </citation>
    <scope>PHOSPHORYLATION [LARGE SCALE ANALYSIS] AT SER-544</scope>
    <scope>IDENTIFICATION BY MASS SPECTROMETRY [LARGE SCALE ANALYSIS]</scope>
    <source>
        <tissue>Liver</tissue>
    </source>
</reference>
<reference key="6">
    <citation type="journal article" date="2010" name="Cell">
        <title>A tissue-specific atlas of mouse protein phosphorylation and expression.</title>
        <authorList>
            <person name="Huttlin E.L."/>
            <person name="Jedrychowski M.P."/>
            <person name="Elias J.E."/>
            <person name="Goswami T."/>
            <person name="Rad R."/>
            <person name="Beausoleil S.A."/>
            <person name="Villen J."/>
            <person name="Haas W."/>
            <person name="Sowa M.E."/>
            <person name="Gygi S.P."/>
        </authorList>
    </citation>
    <scope>PHOSPHORYLATION [LARGE SCALE ANALYSIS] AT SER-544; SER-547 AND SER-665</scope>
    <scope>IDENTIFICATION BY MASS SPECTROMETRY [LARGE SCALE ANALYSIS]</scope>
    <source>
        <tissue>Kidney</tissue>
        <tissue>Lung</tissue>
        <tissue>Spleen</tissue>
    </source>
</reference>
<proteinExistence type="evidence at protein level"/>
<gene>
    <name type="primary">Usp6nl</name>
    <name type="synonym">Kiaa0019</name>
</gene>
<sequence length="819" mass="93574">MNSDQDVALKLAQERAEIVAKYDRGREGAEIEPWEDADYLVYKVTDRFGFLHEEELPYHNAAADRQKQLEIERTSKWLKMLKKWERYKNTEKFHRRIYKGIPLQLRGEVWALLLEIPKMKEETRDLYSKLKHRARGCSPDIRQIDLDVNRTFRDHIMFRDRYGVKQQSLFHVLAAYSIYNTEVGYCQGMSQITALLLMYMNEEDAFWALVKLFSGPKHAMHGFFVQGFPKLLRFQEHHEKILNKFLSKLKQHLDSQEIYTSFYTMKWFFQCFLDRTPFRLNLRIWDIYIFEGERVLTAMSYTILKLHKKHLMKLSMEELVEFLQETLAKDFFFEDDFVIEQLQVSMAELKRAKLDLPEPGKEDEYPKKPLGQLPPESACVNHLSNGQRSVGRPSPKTSSRREDGSPRKNHEHSPVHHSRNGTPERAGQSRRKSVDEGSKNLKHEAESQRKPSPGMQDSSRHYNHAAANQNSNAISNVRKEFMPKWRKPSDASAIERTTKYAVEGKSHSALPALPVAIPGSAETRLPNSRQKMKALDGGEGKRGSNASQYDNVPGGESEHGASAEEGPERTHPHSPRKHPEPSPSPPKVPNKFTFKVQPPSHVRYPPQLPEEDHRAAYPPSYSNPPVYHGNSPKHVPTAHSGFVSTQISPRPQINPSRRPYGSSLSVDTSPEKAYSRPTPVVLPSSRIEVLPIDMGARGYGSSGSPKNGQFILPPVDYLPENRKWSEVSYTYRPEMHGQSWTRDAHRSHLSNLPNYAAFQHIPFQAHGLPEVSVDSPVRYKMSAAVEDASPPGYPYAGPSPSAHHYRNGEGLSVQESVLL</sequence>